<protein>
    <recommendedName>
        <fullName evidence="1">Small ribosomal subunit protein uS19</fullName>
    </recommendedName>
    <alternativeName>
        <fullName evidence="2">30S ribosomal protein S19</fullName>
    </alternativeName>
</protein>
<gene>
    <name evidence="1" type="primary">rpsS</name>
    <name type="ordered locus">OB0123</name>
</gene>
<feature type="chain" id="PRO_0000129868" description="Small ribosomal subunit protein uS19">
    <location>
        <begin position="1"/>
        <end position="92"/>
    </location>
</feature>
<organism>
    <name type="scientific">Oceanobacillus iheyensis (strain DSM 14371 / CIP 107618 / JCM 11309 / KCTC 3954 / HTE831)</name>
    <dbReference type="NCBI Taxonomy" id="221109"/>
    <lineage>
        <taxon>Bacteria</taxon>
        <taxon>Bacillati</taxon>
        <taxon>Bacillota</taxon>
        <taxon>Bacilli</taxon>
        <taxon>Bacillales</taxon>
        <taxon>Bacillaceae</taxon>
        <taxon>Oceanobacillus</taxon>
    </lineage>
</organism>
<proteinExistence type="inferred from homology"/>
<name>RS19_OCEIH</name>
<accession>Q8ETX8</accession>
<keyword id="KW-1185">Reference proteome</keyword>
<keyword id="KW-0687">Ribonucleoprotein</keyword>
<keyword id="KW-0689">Ribosomal protein</keyword>
<keyword id="KW-0694">RNA-binding</keyword>
<keyword id="KW-0699">rRNA-binding</keyword>
<evidence type="ECO:0000255" key="1">
    <source>
        <dbReference type="HAMAP-Rule" id="MF_00531"/>
    </source>
</evidence>
<evidence type="ECO:0000305" key="2"/>
<sequence>MGRSLKKGPFADDHLMKKIEVLNTDDKKQVIKTWSRRSTIFPTFVGHTVAVYDGRKHVPVYITEDMVGHKLGEFAPTRTYRGHAGDDKKTKR</sequence>
<dbReference type="EMBL" id="BA000028">
    <property type="protein sequence ID" value="BAC12079.1"/>
    <property type="molecule type" value="Genomic_DNA"/>
</dbReference>
<dbReference type="RefSeq" id="WP_011064526.1">
    <property type="nucleotide sequence ID" value="NC_004193.1"/>
</dbReference>
<dbReference type="SMR" id="Q8ETX8"/>
<dbReference type="STRING" id="221109.gene:10732313"/>
<dbReference type="KEGG" id="oih:OB0123"/>
<dbReference type="eggNOG" id="COG0185">
    <property type="taxonomic scope" value="Bacteria"/>
</dbReference>
<dbReference type="HOGENOM" id="CLU_144911_0_1_9"/>
<dbReference type="OrthoDB" id="9797833at2"/>
<dbReference type="PhylomeDB" id="Q8ETX8"/>
<dbReference type="Proteomes" id="UP000000822">
    <property type="component" value="Chromosome"/>
</dbReference>
<dbReference type="GO" id="GO:0005737">
    <property type="term" value="C:cytoplasm"/>
    <property type="evidence" value="ECO:0007669"/>
    <property type="project" value="UniProtKB-ARBA"/>
</dbReference>
<dbReference type="GO" id="GO:0015935">
    <property type="term" value="C:small ribosomal subunit"/>
    <property type="evidence" value="ECO:0007669"/>
    <property type="project" value="InterPro"/>
</dbReference>
<dbReference type="GO" id="GO:0019843">
    <property type="term" value="F:rRNA binding"/>
    <property type="evidence" value="ECO:0007669"/>
    <property type="project" value="UniProtKB-UniRule"/>
</dbReference>
<dbReference type="GO" id="GO:0003735">
    <property type="term" value="F:structural constituent of ribosome"/>
    <property type="evidence" value="ECO:0007669"/>
    <property type="project" value="InterPro"/>
</dbReference>
<dbReference type="GO" id="GO:0000028">
    <property type="term" value="P:ribosomal small subunit assembly"/>
    <property type="evidence" value="ECO:0007669"/>
    <property type="project" value="TreeGrafter"/>
</dbReference>
<dbReference type="GO" id="GO:0006412">
    <property type="term" value="P:translation"/>
    <property type="evidence" value="ECO:0007669"/>
    <property type="project" value="UniProtKB-UniRule"/>
</dbReference>
<dbReference type="FunFam" id="3.30.860.10:FF:000001">
    <property type="entry name" value="30S ribosomal protein S19"/>
    <property type="match status" value="1"/>
</dbReference>
<dbReference type="Gene3D" id="3.30.860.10">
    <property type="entry name" value="30s Ribosomal Protein S19, Chain A"/>
    <property type="match status" value="1"/>
</dbReference>
<dbReference type="HAMAP" id="MF_00531">
    <property type="entry name" value="Ribosomal_uS19"/>
    <property type="match status" value="1"/>
</dbReference>
<dbReference type="InterPro" id="IPR002222">
    <property type="entry name" value="Ribosomal_uS19"/>
</dbReference>
<dbReference type="InterPro" id="IPR005732">
    <property type="entry name" value="Ribosomal_uS19_bac-type"/>
</dbReference>
<dbReference type="InterPro" id="IPR020934">
    <property type="entry name" value="Ribosomal_uS19_CS"/>
</dbReference>
<dbReference type="InterPro" id="IPR023575">
    <property type="entry name" value="Ribosomal_uS19_SF"/>
</dbReference>
<dbReference type="NCBIfam" id="TIGR01050">
    <property type="entry name" value="rpsS_bact"/>
    <property type="match status" value="1"/>
</dbReference>
<dbReference type="PANTHER" id="PTHR11880">
    <property type="entry name" value="RIBOSOMAL PROTEIN S19P FAMILY MEMBER"/>
    <property type="match status" value="1"/>
</dbReference>
<dbReference type="PANTHER" id="PTHR11880:SF8">
    <property type="entry name" value="SMALL RIBOSOMAL SUBUNIT PROTEIN US19M"/>
    <property type="match status" value="1"/>
</dbReference>
<dbReference type="Pfam" id="PF00203">
    <property type="entry name" value="Ribosomal_S19"/>
    <property type="match status" value="1"/>
</dbReference>
<dbReference type="PIRSF" id="PIRSF002144">
    <property type="entry name" value="Ribosomal_S19"/>
    <property type="match status" value="1"/>
</dbReference>
<dbReference type="PRINTS" id="PR00975">
    <property type="entry name" value="RIBOSOMALS19"/>
</dbReference>
<dbReference type="SUPFAM" id="SSF54570">
    <property type="entry name" value="Ribosomal protein S19"/>
    <property type="match status" value="1"/>
</dbReference>
<dbReference type="PROSITE" id="PS00323">
    <property type="entry name" value="RIBOSOMAL_S19"/>
    <property type="match status" value="1"/>
</dbReference>
<reference key="1">
    <citation type="journal article" date="2002" name="Nucleic Acids Res.">
        <title>Genome sequence of Oceanobacillus iheyensis isolated from the Iheya Ridge and its unexpected adaptive capabilities to extreme environments.</title>
        <authorList>
            <person name="Takami H."/>
            <person name="Takaki Y."/>
            <person name="Uchiyama I."/>
        </authorList>
    </citation>
    <scope>NUCLEOTIDE SEQUENCE [LARGE SCALE GENOMIC DNA]</scope>
    <source>
        <strain>DSM 14371 / CIP 107618 / JCM 11309 / KCTC 3954 / HTE831</strain>
    </source>
</reference>
<comment type="function">
    <text evidence="1">Protein S19 forms a complex with S13 that binds strongly to the 16S ribosomal RNA.</text>
</comment>
<comment type="similarity">
    <text evidence="1">Belongs to the universal ribosomal protein uS19 family.</text>
</comment>